<feature type="chain" id="PRO_1000193412" description="DNA repair protein RecO">
    <location>
        <begin position="1"/>
        <end position="267"/>
    </location>
</feature>
<sequence length="267" mass="28895">MSGERRLNGLSLKVGPLGEHDRLLTLLSDQEGVTRLAVPGARRPRSSLAAAVPLSLLELQVAGRRGLARVRQLKVLRSFNSVGKQLETLAAAQALAELSLMLVAGNDPLPGLLNTLLMHLERLEALSQAQPAQPNTTLACSVQACVHLLALGGYGLPVQECCRNGTALEPPLGQWEWRCSLMPEEGFAIGALPGAALQLNPSELALLQRLLRPDLPMRRDGELMGPPEVWLRLLAVVECWTRTHLPHHMRALGMLRKAIISSGDGRT</sequence>
<accession>Q7V8W2</accession>
<reference key="1">
    <citation type="journal article" date="2003" name="Nature">
        <title>Genome divergence in two Prochlorococcus ecotypes reflects oceanic niche differentiation.</title>
        <authorList>
            <person name="Rocap G."/>
            <person name="Larimer F.W."/>
            <person name="Lamerdin J.E."/>
            <person name="Malfatti S."/>
            <person name="Chain P."/>
            <person name="Ahlgren N.A."/>
            <person name="Arellano A."/>
            <person name="Coleman M."/>
            <person name="Hauser L."/>
            <person name="Hess W.R."/>
            <person name="Johnson Z.I."/>
            <person name="Land M.L."/>
            <person name="Lindell D."/>
            <person name="Post A.F."/>
            <person name="Regala W."/>
            <person name="Shah M."/>
            <person name="Shaw S.L."/>
            <person name="Steglich C."/>
            <person name="Sullivan M.B."/>
            <person name="Ting C.S."/>
            <person name="Tolonen A."/>
            <person name="Webb E.A."/>
            <person name="Zinser E.R."/>
            <person name="Chisholm S.W."/>
        </authorList>
    </citation>
    <scope>NUCLEOTIDE SEQUENCE [LARGE SCALE GENOMIC DNA]</scope>
    <source>
        <strain>MIT 9313</strain>
    </source>
</reference>
<organism>
    <name type="scientific">Prochlorococcus marinus (strain MIT 9313)</name>
    <dbReference type="NCBI Taxonomy" id="74547"/>
    <lineage>
        <taxon>Bacteria</taxon>
        <taxon>Bacillati</taxon>
        <taxon>Cyanobacteriota</taxon>
        <taxon>Cyanophyceae</taxon>
        <taxon>Synechococcales</taxon>
        <taxon>Prochlorococcaceae</taxon>
        <taxon>Prochlorococcus</taxon>
    </lineage>
</organism>
<name>RECO_PROMM</name>
<proteinExistence type="inferred from homology"/>
<dbReference type="EMBL" id="BX548175">
    <property type="protein sequence ID" value="CAE20386.1"/>
    <property type="molecule type" value="Genomic_DNA"/>
</dbReference>
<dbReference type="RefSeq" id="WP_011129590.1">
    <property type="nucleotide sequence ID" value="NC_005071.1"/>
</dbReference>
<dbReference type="SMR" id="Q7V8W2"/>
<dbReference type="KEGG" id="pmt:PMT_0211"/>
<dbReference type="eggNOG" id="COG1381">
    <property type="taxonomic scope" value="Bacteria"/>
</dbReference>
<dbReference type="HOGENOM" id="CLU_066632_0_0_3"/>
<dbReference type="OrthoDB" id="9797083at2"/>
<dbReference type="Proteomes" id="UP000001423">
    <property type="component" value="Chromosome"/>
</dbReference>
<dbReference type="GO" id="GO:0043590">
    <property type="term" value="C:bacterial nucleoid"/>
    <property type="evidence" value="ECO:0007669"/>
    <property type="project" value="TreeGrafter"/>
</dbReference>
<dbReference type="GO" id="GO:0006310">
    <property type="term" value="P:DNA recombination"/>
    <property type="evidence" value="ECO:0007669"/>
    <property type="project" value="UniProtKB-UniRule"/>
</dbReference>
<dbReference type="GO" id="GO:0006302">
    <property type="term" value="P:double-strand break repair"/>
    <property type="evidence" value="ECO:0007669"/>
    <property type="project" value="TreeGrafter"/>
</dbReference>
<dbReference type="Gene3D" id="2.40.50.140">
    <property type="entry name" value="Nucleic acid-binding proteins"/>
    <property type="match status" value="1"/>
</dbReference>
<dbReference type="Gene3D" id="1.20.1440.120">
    <property type="entry name" value="Recombination protein O, C-terminal domain"/>
    <property type="match status" value="1"/>
</dbReference>
<dbReference type="HAMAP" id="MF_00201">
    <property type="entry name" value="RecO"/>
    <property type="match status" value="1"/>
</dbReference>
<dbReference type="InterPro" id="IPR037278">
    <property type="entry name" value="ARFGAP/RecO"/>
</dbReference>
<dbReference type="InterPro" id="IPR022572">
    <property type="entry name" value="DNA_rep/recomb_RecO_N"/>
</dbReference>
<dbReference type="InterPro" id="IPR012340">
    <property type="entry name" value="NA-bd_OB-fold"/>
</dbReference>
<dbReference type="InterPro" id="IPR003717">
    <property type="entry name" value="RecO"/>
</dbReference>
<dbReference type="InterPro" id="IPR042242">
    <property type="entry name" value="RecO_C"/>
</dbReference>
<dbReference type="NCBIfam" id="TIGR00613">
    <property type="entry name" value="reco"/>
    <property type="match status" value="1"/>
</dbReference>
<dbReference type="PANTHER" id="PTHR33991">
    <property type="entry name" value="DNA REPAIR PROTEIN RECO"/>
    <property type="match status" value="1"/>
</dbReference>
<dbReference type="PANTHER" id="PTHR33991:SF1">
    <property type="entry name" value="DNA REPAIR PROTEIN RECO"/>
    <property type="match status" value="1"/>
</dbReference>
<dbReference type="Pfam" id="PF02565">
    <property type="entry name" value="RecO_C"/>
    <property type="match status" value="1"/>
</dbReference>
<dbReference type="Pfam" id="PF11967">
    <property type="entry name" value="RecO_N"/>
    <property type="match status" value="1"/>
</dbReference>
<dbReference type="SUPFAM" id="SSF57863">
    <property type="entry name" value="ArfGap/RecO-like zinc finger"/>
    <property type="match status" value="1"/>
</dbReference>
<dbReference type="SUPFAM" id="SSF50249">
    <property type="entry name" value="Nucleic acid-binding proteins"/>
    <property type="match status" value="1"/>
</dbReference>
<evidence type="ECO:0000255" key="1">
    <source>
        <dbReference type="HAMAP-Rule" id="MF_00201"/>
    </source>
</evidence>
<comment type="function">
    <text evidence="1">Involved in DNA repair and RecF pathway recombination.</text>
</comment>
<comment type="similarity">
    <text evidence="1">Belongs to the RecO family.</text>
</comment>
<keyword id="KW-0227">DNA damage</keyword>
<keyword id="KW-0233">DNA recombination</keyword>
<keyword id="KW-0234">DNA repair</keyword>
<keyword id="KW-1185">Reference proteome</keyword>
<protein>
    <recommendedName>
        <fullName evidence="1">DNA repair protein RecO</fullName>
    </recommendedName>
    <alternativeName>
        <fullName evidence="1">Recombination protein O</fullName>
    </alternativeName>
</protein>
<gene>
    <name evidence="1" type="primary">recO</name>
    <name type="ordered locus">PMT_0211</name>
</gene>